<evidence type="ECO:0000250" key="1"/>
<evidence type="ECO:0000305" key="2"/>
<keyword id="KW-1185">Reference proteome</keyword>
<proteinExistence type="inferred from homology"/>
<organism>
    <name type="scientific">Rickettsia prowazekii (strain Madrid E)</name>
    <dbReference type="NCBI Taxonomy" id="272947"/>
    <lineage>
        <taxon>Bacteria</taxon>
        <taxon>Pseudomonadati</taxon>
        <taxon>Pseudomonadota</taxon>
        <taxon>Alphaproteobacteria</taxon>
        <taxon>Rickettsiales</taxon>
        <taxon>Rickettsiaceae</taxon>
        <taxon>Rickettsieae</taxon>
        <taxon>Rickettsia</taxon>
        <taxon>typhus group</taxon>
    </lineage>
</organism>
<accession>Q9ZD61</accession>
<reference key="1">
    <citation type="journal article" date="1998" name="Nature">
        <title>The genome sequence of Rickettsia prowazekii and the origin of mitochondria.</title>
        <authorList>
            <person name="Andersson S.G.E."/>
            <person name="Zomorodipour A."/>
            <person name="Andersson J.O."/>
            <person name="Sicheritz-Ponten T."/>
            <person name="Alsmark U.C.M."/>
            <person name="Podowski R.M."/>
            <person name="Naeslund A.K."/>
            <person name="Eriksson A.-S."/>
            <person name="Winkler H.H."/>
            <person name="Kurland C.G."/>
        </authorList>
    </citation>
    <scope>NUCLEOTIDE SEQUENCE [LARGE SCALE GENOMIC DNA]</scope>
    <source>
        <strain>Madrid E</strain>
    </source>
</reference>
<dbReference type="EMBL" id="AJ235272">
    <property type="protein sequence ID" value="CAA14938.1"/>
    <property type="molecule type" value="Genomic_DNA"/>
</dbReference>
<dbReference type="PIR" id="H71651">
    <property type="entry name" value="H71651"/>
</dbReference>
<dbReference type="RefSeq" id="NP_220862.1">
    <property type="nucleotide sequence ID" value="NC_000963.1"/>
</dbReference>
<dbReference type="RefSeq" id="WP_004599506.1">
    <property type="nucleotide sequence ID" value="NC_000963.1"/>
</dbReference>
<dbReference type="SMR" id="Q9ZD61"/>
<dbReference type="STRING" id="272947.gene:17555565"/>
<dbReference type="EnsemblBacteria" id="CAA14938">
    <property type="protein sequence ID" value="CAA14938"/>
    <property type="gene ID" value="CAA14938"/>
</dbReference>
<dbReference type="GeneID" id="57569610"/>
<dbReference type="KEGG" id="rpr:RP485"/>
<dbReference type="PATRIC" id="fig|272947.5.peg.495"/>
<dbReference type="eggNOG" id="COG0822">
    <property type="taxonomic scope" value="Bacteria"/>
</dbReference>
<dbReference type="HOGENOM" id="CLU_079283_5_0_5"/>
<dbReference type="OrthoDB" id="9808097at2"/>
<dbReference type="Proteomes" id="UP000002480">
    <property type="component" value="Chromosome"/>
</dbReference>
<dbReference type="GO" id="GO:0005737">
    <property type="term" value="C:cytoplasm"/>
    <property type="evidence" value="ECO:0007669"/>
    <property type="project" value="UniProtKB-ARBA"/>
</dbReference>
<dbReference type="GO" id="GO:0005506">
    <property type="term" value="F:iron ion binding"/>
    <property type="evidence" value="ECO:0007669"/>
    <property type="project" value="InterPro"/>
</dbReference>
<dbReference type="GO" id="GO:0051536">
    <property type="term" value="F:iron-sulfur cluster binding"/>
    <property type="evidence" value="ECO:0007669"/>
    <property type="project" value="InterPro"/>
</dbReference>
<dbReference type="GO" id="GO:0016226">
    <property type="term" value="P:iron-sulfur cluster assembly"/>
    <property type="evidence" value="ECO:0007669"/>
    <property type="project" value="InterPro"/>
</dbReference>
<dbReference type="CDD" id="cd06664">
    <property type="entry name" value="IscU_like"/>
    <property type="match status" value="1"/>
</dbReference>
<dbReference type="FunFam" id="3.90.1010.10:FF:000001">
    <property type="entry name" value="Iron-sulfur cluster assembly scaffold protein IscU"/>
    <property type="match status" value="1"/>
</dbReference>
<dbReference type="Gene3D" id="3.90.1010.10">
    <property type="match status" value="1"/>
</dbReference>
<dbReference type="InterPro" id="IPR011339">
    <property type="entry name" value="ISCU"/>
</dbReference>
<dbReference type="InterPro" id="IPR002871">
    <property type="entry name" value="NIF_FeS_clus_asmbl_NifU_N"/>
</dbReference>
<dbReference type="NCBIfam" id="TIGR01999">
    <property type="entry name" value="iscU"/>
    <property type="match status" value="1"/>
</dbReference>
<dbReference type="PANTHER" id="PTHR10093">
    <property type="entry name" value="IRON-SULFUR CLUSTER ASSEMBLY ENZYME NIFU HOMOLOG"/>
    <property type="match status" value="1"/>
</dbReference>
<dbReference type="Pfam" id="PF01592">
    <property type="entry name" value="NifU_N"/>
    <property type="match status" value="1"/>
</dbReference>
<dbReference type="SUPFAM" id="SSF82649">
    <property type="entry name" value="SufE/NifU"/>
    <property type="match status" value="1"/>
</dbReference>
<sequence length="131" mass="14223">MAYSKKVIDHYENPRNVGSLDKKKKNVGTGLVGAPACGDVMKLQIEVGDDEIITDAKFKTFGCGSAIASSSLVTEWIKGKSVEDAKEIKNTEIAKELSLPPVKLHCSLLAEDAIKAAIADYKQKRENKKDS</sequence>
<comment type="function">
    <text evidence="1">A scaffold on which IscS assembles Fe-S clusters. Subsequently gives the nascent cluster to other proteins. It is likely that Fe-S cluster coordination is flexible as the role of this complex is to build and then hand off Fe-S clusters (By similarity).</text>
</comment>
<comment type="subunit">
    <text evidence="1">Forms a heterotetramer with IscS; each subunit of the IscS dimer contacts an IscU monomer.</text>
</comment>
<comment type="similarity">
    <text evidence="2">Belongs to the NifU family.</text>
</comment>
<name>ISCU_RICPR</name>
<gene>
    <name type="primary">iscU</name>
    <name type="synonym">nifU</name>
    <name type="ordered locus">RP485</name>
</gene>
<feature type="chain" id="PRO_0000166188" description="Iron-sulfur cluster assembly scaffold protein IscU">
    <location>
        <begin position="1"/>
        <end position="131"/>
    </location>
</feature>
<protein>
    <recommendedName>
        <fullName>Iron-sulfur cluster assembly scaffold protein IscU</fullName>
    </recommendedName>
    <alternativeName>
        <fullName>Sulfur acceptor protein IscU</fullName>
    </alternativeName>
</protein>